<sequence length="494" mass="52874">MQARYSVSDPNALGVVPYLSEQNYYRAAGSYGGMASPMGVYSGHPEQYGAGMGRSYAPYHHQPAAPKDLVKPPYSYIALITMAIQNAPEKKITLNGIYQFIMDRFPFYRENKQGWQNSIRHNLSLNECFVKVPRDDKKPGKGSYWTLDPDSYNMFENGSFLRRRRRFKKKDVPKDKEERAHLKEPPSTTAKGAPTGTPVADGPKEAEKKVVVKSEAASPALPVITKVETLSPEGALQASPRSASSTPAGSPDGSLPEHHAAAPNGLPGFSVETIMTLRTSPPGGDLSPAAARAGLVVPPLALPYAAAPPAAYTQPCAQGLEAAGSAGYQCSMRAMSLYTGAERPAHVCVPPALDEALSDHPSGPGSPLGALNLAAGQEGALGASGHHHQHHGHLHPQAPPPAPQPPPAPQPATQATSWYLNHGGDLSHLPGHTFATQQQTFPNVREMFNSHRLGLDNSSLGESQVSNASCQLPYRATPSLYRHAAPYSYDCTKY</sequence>
<organism>
    <name type="scientific">Mus musculus</name>
    <name type="common">Mouse</name>
    <dbReference type="NCBI Taxonomy" id="10090"/>
    <lineage>
        <taxon>Eukaryota</taxon>
        <taxon>Metazoa</taxon>
        <taxon>Chordata</taxon>
        <taxon>Craniata</taxon>
        <taxon>Vertebrata</taxon>
        <taxon>Euteleostomi</taxon>
        <taxon>Mammalia</taxon>
        <taxon>Eutheria</taxon>
        <taxon>Euarchontoglires</taxon>
        <taxon>Glires</taxon>
        <taxon>Rodentia</taxon>
        <taxon>Myomorpha</taxon>
        <taxon>Muroidea</taxon>
        <taxon>Muridae</taxon>
        <taxon>Murinae</taxon>
        <taxon>Mus</taxon>
        <taxon>Mus</taxon>
    </lineage>
</organism>
<dbReference type="EMBL" id="X92499">
    <property type="protein sequence ID" value="CAA63244.1"/>
    <property type="molecule type" value="mRNA"/>
</dbReference>
<dbReference type="EMBL" id="Y08222">
    <property type="protein sequence ID" value="CAA69399.1"/>
    <property type="molecule type" value="Genomic_DNA"/>
</dbReference>
<dbReference type="EMBL" id="X74040">
    <property type="protein sequence ID" value="CAA52192.1"/>
    <property type="molecule type" value="mRNA"/>
</dbReference>
<dbReference type="EMBL" id="AK076319">
    <property type="protein sequence ID" value="BAC36298.1"/>
    <property type="molecule type" value="mRNA"/>
</dbReference>
<dbReference type="EMBL" id="S63607">
    <property type="protein sequence ID" value="AAB27463.1"/>
    <property type="molecule type" value="mRNA"/>
</dbReference>
<dbReference type="CCDS" id="CCDS40499.1"/>
<dbReference type="PIR" id="S34472">
    <property type="entry name" value="S34472"/>
</dbReference>
<dbReference type="RefSeq" id="NP_038547.2">
    <property type="nucleotide sequence ID" value="NM_013519.2"/>
</dbReference>
<dbReference type="SMR" id="Q61850"/>
<dbReference type="FunCoup" id="Q61850">
    <property type="interactions" value="871"/>
</dbReference>
<dbReference type="STRING" id="10090.ENSMUSP00000055290"/>
<dbReference type="GlyGen" id="Q61850">
    <property type="glycosylation" value="3 sites, 1 O-linked glycan (1 site)"/>
</dbReference>
<dbReference type="iPTMnet" id="Q61850"/>
<dbReference type="PhosphoSitePlus" id="Q61850"/>
<dbReference type="PaxDb" id="10090-ENSMUSP00000055290"/>
<dbReference type="ProteomicsDB" id="271791"/>
<dbReference type="Pumba" id="Q61850"/>
<dbReference type="Antibodypedia" id="17195">
    <property type="antibodies" value="564 antibodies from 35 providers"/>
</dbReference>
<dbReference type="DNASU" id="14234"/>
<dbReference type="Ensembl" id="ENSMUST00000054691.8">
    <property type="protein sequence ID" value="ENSMUSP00000055290.7"/>
    <property type="gene ID" value="ENSMUSG00000046714.8"/>
</dbReference>
<dbReference type="GeneID" id="14234"/>
<dbReference type="KEGG" id="mmu:14234"/>
<dbReference type="UCSC" id="uc012glx.1">
    <property type="organism name" value="mouse"/>
</dbReference>
<dbReference type="AGR" id="MGI:1347481"/>
<dbReference type="CTD" id="2303"/>
<dbReference type="MGI" id="MGI:1347481">
    <property type="gene designation" value="Foxc2"/>
</dbReference>
<dbReference type="VEuPathDB" id="HostDB:ENSMUSG00000046714"/>
<dbReference type="eggNOG" id="KOG2294">
    <property type="taxonomic scope" value="Eukaryota"/>
</dbReference>
<dbReference type="GeneTree" id="ENSGT00940000162619"/>
<dbReference type="HOGENOM" id="CLU_035722_3_1_1"/>
<dbReference type="InParanoid" id="Q61850"/>
<dbReference type="OMA" id="REMFTSH"/>
<dbReference type="OrthoDB" id="5954824at2759"/>
<dbReference type="PhylomeDB" id="Q61850"/>
<dbReference type="TreeFam" id="TF316127"/>
<dbReference type="BioGRID-ORCS" id="14234">
    <property type="hits" value="4 hits in 78 CRISPR screens"/>
</dbReference>
<dbReference type="PRO" id="PR:Q61850"/>
<dbReference type="Proteomes" id="UP000000589">
    <property type="component" value="Chromosome 8"/>
</dbReference>
<dbReference type="RNAct" id="Q61850">
    <property type="molecule type" value="protein"/>
</dbReference>
<dbReference type="Bgee" id="ENSMUSG00000046714">
    <property type="expression patterns" value="Expressed in metanephric mesenchyme and 214 other cell types or tissues"/>
</dbReference>
<dbReference type="ExpressionAtlas" id="Q61850">
    <property type="expression patterns" value="baseline and differential"/>
</dbReference>
<dbReference type="GO" id="GO:0016604">
    <property type="term" value="C:nuclear body"/>
    <property type="evidence" value="ECO:0007669"/>
    <property type="project" value="Ensembl"/>
</dbReference>
<dbReference type="GO" id="GO:0005634">
    <property type="term" value="C:nucleus"/>
    <property type="evidence" value="ECO:0000305"/>
    <property type="project" value="UniProtKB"/>
</dbReference>
<dbReference type="GO" id="GO:0031490">
    <property type="term" value="F:chromatin DNA binding"/>
    <property type="evidence" value="ECO:0000250"/>
    <property type="project" value="UniProtKB"/>
</dbReference>
<dbReference type="GO" id="GO:0003677">
    <property type="term" value="F:DNA binding"/>
    <property type="evidence" value="ECO:0000314"/>
    <property type="project" value="MGI"/>
</dbReference>
<dbReference type="GO" id="GO:0001216">
    <property type="term" value="F:DNA-binding transcription activator activity"/>
    <property type="evidence" value="ECO:0000314"/>
    <property type="project" value="UniProtKB"/>
</dbReference>
<dbReference type="GO" id="GO:0001228">
    <property type="term" value="F:DNA-binding transcription activator activity, RNA polymerase II-specific"/>
    <property type="evidence" value="ECO:0007669"/>
    <property type="project" value="Ensembl"/>
</dbReference>
<dbReference type="GO" id="GO:0003700">
    <property type="term" value="F:DNA-binding transcription factor activity"/>
    <property type="evidence" value="ECO:0000314"/>
    <property type="project" value="BHF-UCL"/>
</dbReference>
<dbReference type="GO" id="GO:0000981">
    <property type="term" value="F:DNA-binding transcription factor activity, RNA polymerase II-specific"/>
    <property type="evidence" value="ECO:0000316"/>
    <property type="project" value="MGI"/>
</dbReference>
<dbReference type="GO" id="GO:0042802">
    <property type="term" value="F:identical protein binding"/>
    <property type="evidence" value="ECO:0007669"/>
    <property type="project" value="Ensembl"/>
</dbReference>
<dbReference type="GO" id="GO:1990841">
    <property type="term" value="F:promoter-specific chromatin binding"/>
    <property type="evidence" value="ECO:0000314"/>
    <property type="project" value="UniProtKB"/>
</dbReference>
<dbReference type="GO" id="GO:0000978">
    <property type="term" value="F:RNA polymerase II cis-regulatory region sequence-specific DNA binding"/>
    <property type="evidence" value="ECO:0007669"/>
    <property type="project" value="Ensembl"/>
</dbReference>
<dbReference type="GO" id="GO:0043565">
    <property type="term" value="F:sequence-specific DNA binding"/>
    <property type="evidence" value="ECO:0000250"/>
    <property type="project" value="UniProtKB"/>
</dbReference>
<dbReference type="GO" id="GO:0000976">
    <property type="term" value="F:transcription cis-regulatory region binding"/>
    <property type="evidence" value="ECO:0000314"/>
    <property type="project" value="BHF-UCL"/>
</dbReference>
<dbReference type="GO" id="GO:0003275">
    <property type="term" value="P:apoptotic process involved in outflow tract morphogenesis"/>
    <property type="evidence" value="ECO:0000316"/>
    <property type="project" value="MGI"/>
</dbReference>
<dbReference type="GO" id="GO:0048844">
    <property type="term" value="P:artery morphogenesis"/>
    <property type="evidence" value="ECO:0000315"/>
    <property type="project" value="MGI"/>
</dbReference>
<dbReference type="GO" id="GO:0001568">
    <property type="term" value="P:blood vessel development"/>
    <property type="evidence" value="ECO:0000316"/>
    <property type="project" value="MGI"/>
</dbReference>
<dbReference type="GO" id="GO:0097746">
    <property type="term" value="P:blood vessel diameter maintenance"/>
    <property type="evidence" value="ECO:0000316"/>
    <property type="project" value="MGI"/>
</dbReference>
<dbReference type="GO" id="GO:0001974">
    <property type="term" value="P:blood vessel remodeling"/>
    <property type="evidence" value="ECO:0000316"/>
    <property type="project" value="MGI"/>
</dbReference>
<dbReference type="GO" id="GO:0001569">
    <property type="term" value="P:branching involved in blood vessel morphogenesis"/>
    <property type="evidence" value="ECO:0000316"/>
    <property type="project" value="MGI"/>
</dbReference>
<dbReference type="GO" id="GO:0043010">
    <property type="term" value="P:camera-type eye development"/>
    <property type="evidence" value="ECO:0000315"/>
    <property type="project" value="MGI"/>
</dbReference>
<dbReference type="GO" id="GO:0060038">
    <property type="term" value="P:cardiac muscle cell proliferation"/>
    <property type="evidence" value="ECO:0000316"/>
    <property type="project" value="MGI"/>
</dbReference>
<dbReference type="GO" id="GO:0008283">
    <property type="term" value="P:cell population proliferation"/>
    <property type="evidence" value="ECO:0000315"/>
    <property type="project" value="MGI"/>
</dbReference>
<dbReference type="GO" id="GO:0030199">
    <property type="term" value="P:collagen fibril organization"/>
    <property type="evidence" value="ECO:0000315"/>
    <property type="project" value="MGI"/>
</dbReference>
<dbReference type="GO" id="GO:0048701">
    <property type="term" value="P:embryonic cranial skeleton morphogenesis"/>
    <property type="evidence" value="ECO:0000315"/>
    <property type="project" value="MGI"/>
</dbReference>
<dbReference type="GO" id="GO:0035050">
    <property type="term" value="P:embryonic heart tube development"/>
    <property type="evidence" value="ECO:0000316"/>
    <property type="project" value="MGI"/>
</dbReference>
<dbReference type="GO" id="GO:0048704">
    <property type="term" value="P:embryonic skeletal system morphogenesis"/>
    <property type="evidence" value="ECO:0000315"/>
    <property type="project" value="MGI"/>
</dbReference>
<dbReference type="GO" id="GO:0048703">
    <property type="term" value="P:embryonic viscerocranium morphogenesis"/>
    <property type="evidence" value="ECO:0000315"/>
    <property type="project" value="MGI"/>
</dbReference>
<dbReference type="GO" id="GO:0072011">
    <property type="term" value="P:glomerular endothelium development"/>
    <property type="evidence" value="ECO:0000315"/>
    <property type="project" value="MGI"/>
</dbReference>
<dbReference type="GO" id="GO:0072144">
    <property type="term" value="P:glomerular mesangial cell development"/>
    <property type="evidence" value="ECO:0000315"/>
    <property type="project" value="MGI"/>
</dbReference>
<dbReference type="GO" id="GO:0007507">
    <property type="term" value="P:heart development"/>
    <property type="evidence" value="ECO:0000315"/>
    <property type="project" value="MGI"/>
</dbReference>
<dbReference type="GO" id="GO:0003007">
    <property type="term" value="P:heart morphogenesis"/>
    <property type="evidence" value="ECO:0000316"/>
    <property type="project" value="MGI"/>
</dbReference>
<dbReference type="GO" id="GO:0008286">
    <property type="term" value="P:insulin receptor signaling pathway"/>
    <property type="evidence" value="ECO:0000250"/>
    <property type="project" value="UniProtKB"/>
</dbReference>
<dbReference type="GO" id="GO:0001822">
    <property type="term" value="P:kidney development"/>
    <property type="evidence" value="ECO:0000315"/>
    <property type="project" value="MGI"/>
</dbReference>
<dbReference type="GO" id="GO:0001945">
    <property type="term" value="P:lymph vessel development"/>
    <property type="evidence" value="ECO:0000316"/>
    <property type="project" value="MGI"/>
</dbReference>
<dbReference type="GO" id="GO:0001946">
    <property type="term" value="P:lymphangiogenesis"/>
    <property type="evidence" value="ECO:0000250"/>
    <property type="project" value="UniProtKB"/>
</dbReference>
<dbReference type="GO" id="GO:0001656">
    <property type="term" value="P:metanephros development"/>
    <property type="evidence" value="ECO:0000315"/>
    <property type="project" value="MGI"/>
</dbReference>
<dbReference type="GO" id="GO:1902257">
    <property type="term" value="P:negative regulation of apoptotic process involved in outflow tract morphogenesis"/>
    <property type="evidence" value="ECO:0000316"/>
    <property type="project" value="MGI"/>
</dbReference>
<dbReference type="GO" id="GO:0120163">
    <property type="term" value="P:negative regulation of cold-induced thermogenesis"/>
    <property type="evidence" value="ECO:0000250"/>
    <property type="project" value="YuBioLab"/>
</dbReference>
<dbReference type="GO" id="GO:0000122">
    <property type="term" value="P:negative regulation of transcription by RNA polymerase II"/>
    <property type="evidence" value="ECO:0000314"/>
    <property type="project" value="BHF-UCL"/>
</dbReference>
<dbReference type="GO" id="GO:0014032">
    <property type="term" value="P:neural crest cell development"/>
    <property type="evidence" value="ECO:0000316"/>
    <property type="project" value="MGI"/>
</dbReference>
<dbReference type="GO" id="GO:0007219">
    <property type="term" value="P:Notch signaling pathway"/>
    <property type="evidence" value="ECO:0000316"/>
    <property type="project" value="MGI"/>
</dbReference>
<dbReference type="GO" id="GO:0001503">
    <property type="term" value="P:ossification"/>
    <property type="evidence" value="ECO:0000315"/>
    <property type="project" value="MGI"/>
</dbReference>
<dbReference type="GO" id="GO:0048341">
    <property type="term" value="P:paraxial mesoderm formation"/>
    <property type="evidence" value="ECO:0000316"/>
    <property type="project" value="MGI"/>
</dbReference>
<dbReference type="GO" id="GO:0048343">
    <property type="term" value="P:paraxial mesodermal cell fate commitment"/>
    <property type="evidence" value="ECO:0000315"/>
    <property type="project" value="MGI"/>
</dbReference>
<dbReference type="GO" id="GO:0072112">
    <property type="term" value="P:podocyte differentiation"/>
    <property type="evidence" value="ECO:0000315"/>
    <property type="project" value="MGI"/>
</dbReference>
<dbReference type="GO" id="GO:0033630">
    <property type="term" value="P:positive regulation of cell adhesion mediated by integrin"/>
    <property type="evidence" value="ECO:0000314"/>
    <property type="project" value="BHF-UCL"/>
</dbReference>
<dbReference type="GO" id="GO:0090050">
    <property type="term" value="P:positive regulation of cell migration involved in sprouting angiogenesis"/>
    <property type="evidence" value="ECO:0000314"/>
    <property type="project" value="BHF-UCL"/>
</dbReference>
<dbReference type="GO" id="GO:0045893">
    <property type="term" value="P:positive regulation of DNA-templated transcription"/>
    <property type="evidence" value="ECO:0000314"/>
    <property type="project" value="UniProtKB"/>
</dbReference>
<dbReference type="GO" id="GO:0010595">
    <property type="term" value="P:positive regulation of endothelial cell migration"/>
    <property type="evidence" value="ECO:0000314"/>
    <property type="project" value="BHF-UCL"/>
</dbReference>
<dbReference type="GO" id="GO:0033625">
    <property type="term" value="P:positive regulation of integrin activation"/>
    <property type="evidence" value="ECO:0000305"/>
    <property type="project" value="BHF-UCL"/>
</dbReference>
<dbReference type="GO" id="GO:0045944">
    <property type="term" value="P:positive regulation of transcription by RNA polymerase II"/>
    <property type="evidence" value="ECO:0000314"/>
    <property type="project" value="BHF-UCL"/>
</dbReference>
<dbReference type="GO" id="GO:0035470">
    <property type="term" value="P:positive regulation of vascular wound healing"/>
    <property type="evidence" value="ECO:0000314"/>
    <property type="project" value="BHF-UCL"/>
</dbReference>
<dbReference type="GO" id="GO:0046620">
    <property type="term" value="P:regulation of organ growth"/>
    <property type="evidence" value="ECO:0000316"/>
    <property type="project" value="MGI"/>
</dbReference>
<dbReference type="GO" id="GO:0009725">
    <property type="term" value="P:response to hormone"/>
    <property type="evidence" value="ECO:0000250"/>
    <property type="project" value="UniProtKB"/>
</dbReference>
<dbReference type="GO" id="GO:0001501">
    <property type="term" value="P:skeletal system development"/>
    <property type="evidence" value="ECO:0000315"/>
    <property type="project" value="MGI"/>
</dbReference>
<dbReference type="GO" id="GO:0001756">
    <property type="term" value="P:somitogenesis"/>
    <property type="evidence" value="ECO:0000316"/>
    <property type="project" value="UniProtKB"/>
</dbReference>
<dbReference type="GO" id="GO:0001657">
    <property type="term" value="P:ureteric bud development"/>
    <property type="evidence" value="ECO:0000315"/>
    <property type="project" value="MGI"/>
</dbReference>
<dbReference type="GO" id="GO:0048010">
    <property type="term" value="P:vascular endothelial growth factor receptor signaling pathway"/>
    <property type="evidence" value="ECO:0000316"/>
    <property type="project" value="MGI"/>
</dbReference>
<dbReference type="GO" id="GO:0055010">
    <property type="term" value="P:ventricular cardiac muscle tissue morphogenesis"/>
    <property type="evidence" value="ECO:0000316"/>
    <property type="project" value="MGI"/>
</dbReference>
<dbReference type="CDD" id="cd20044">
    <property type="entry name" value="FH_FOXC1"/>
    <property type="match status" value="1"/>
</dbReference>
<dbReference type="FunFam" id="1.10.10.10:FF:000016">
    <property type="entry name" value="Forkhead box protein I1"/>
    <property type="match status" value="1"/>
</dbReference>
<dbReference type="Gene3D" id="1.10.10.10">
    <property type="entry name" value="Winged helix-like DNA-binding domain superfamily/Winged helix DNA-binding domain"/>
    <property type="match status" value="1"/>
</dbReference>
<dbReference type="InterPro" id="IPR001766">
    <property type="entry name" value="Fork_head_dom"/>
</dbReference>
<dbReference type="InterPro" id="IPR050211">
    <property type="entry name" value="FOX_domain-containing"/>
</dbReference>
<dbReference type="InterPro" id="IPR047391">
    <property type="entry name" value="FOXC1/C2-like_FH"/>
</dbReference>
<dbReference type="InterPro" id="IPR018122">
    <property type="entry name" value="TF_fork_head_CS_1"/>
</dbReference>
<dbReference type="InterPro" id="IPR030456">
    <property type="entry name" value="TF_fork_head_CS_2"/>
</dbReference>
<dbReference type="InterPro" id="IPR036388">
    <property type="entry name" value="WH-like_DNA-bd_sf"/>
</dbReference>
<dbReference type="InterPro" id="IPR036390">
    <property type="entry name" value="WH_DNA-bd_sf"/>
</dbReference>
<dbReference type="PANTHER" id="PTHR11829">
    <property type="entry name" value="FORKHEAD BOX PROTEIN"/>
    <property type="match status" value="1"/>
</dbReference>
<dbReference type="PANTHER" id="PTHR11829:SF189">
    <property type="entry name" value="FORKHEAD BOX PROTEIN C2"/>
    <property type="match status" value="1"/>
</dbReference>
<dbReference type="Pfam" id="PF00250">
    <property type="entry name" value="Forkhead"/>
    <property type="match status" value="1"/>
</dbReference>
<dbReference type="PRINTS" id="PR00053">
    <property type="entry name" value="FORKHEAD"/>
</dbReference>
<dbReference type="SMART" id="SM00339">
    <property type="entry name" value="FH"/>
    <property type="match status" value="1"/>
</dbReference>
<dbReference type="SUPFAM" id="SSF46785">
    <property type="entry name" value="Winged helix' DNA-binding domain"/>
    <property type="match status" value="1"/>
</dbReference>
<dbReference type="PROSITE" id="PS00657">
    <property type="entry name" value="FORK_HEAD_1"/>
    <property type="match status" value="1"/>
</dbReference>
<dbReference type="PROSITE" id="PS00658">
    <property type="entry name" value="FORK_HEAD_2"/>
    <property type="match status" value="1"/>
</dbReference>
<dbReference type="PROSITE" id="PS50039">
    <property type="entry name" value="FORK_HEAD_3"/>
    <property type="match status" value="1"/>
</dbReference>
<accession>Q61850</accession>
<accession>P97948</accession>
<accession>Q63869</accession>
<accession>Q8C694</accession>
<keyword id="KW-0010">Activator</keyword>
<keyword id="KW-0217">Developmental protein</keyword>
<keyword id="KW-0238">DNA-binding</keyword>
<keyword id="KW-1017">Isopeptide bond</keyword>
<keyword id="KW-0488">Methylation</keyword>
<keyword id="KW-0539">Nucleus</keyword>
<keyword id="KW-0597">Phosphoprotein</keyword>
<keyword id="KW-1185">Reference proteome</keyword>
<keyword id="KW-0804">Transcription</keyword>
<keyword id="KW-0805">Transcription regulation</keyword>
<keyword id="KW-0832">Ubl conjugation</keyword>
<proteinExistence type="evidence at protein level"/>
<comment type="function">
    <text evidence="6">Transcriptional activator.</text>
</comment>
<comment type="subcellular location">
    <subcellularLocation>
        <location evidence="1">Nucleus</location>
    </subcellularLocation>
</comment>
<comment type="tissue specificity">
    <text evidence="5">Expressed in the brain, muscle, heart, fat, kidney, lung, liver, uterus, ovary and testis.</text>
</comment>
<comment type="developmental stage">
    <text evidence="4 5">Expressed at 10.5 dpc to 18.5 dpc, expression peaks at 11.5 dpc and decreases thereafter (PubMed:8674414). Expressed in the non-notochordal mesoderm at 7.5 dpc (PubMed:8674414). Expressed in areas of mesenchymal condensation in the trunk, head and limbs at 8 dpc (PubMed:8674414). Widely expressed in mesenteric lymphatic endothelial cells at 16.5 dpc, expression thereafter is restricted to the lymphatic valve region at 18.5 dpc (at protein level) (PubMed:28179430). Also expressed in skin lymphatic endothelial cells at 15.5 and 18.5 dpc (PubMed:28179430).</text>
</comment>
<comment type="PTM">
    <text evidence="1">Phosphorylation regulates FOXC2 transcriptional activity by promoting its recruitment to chromatin.</text>
</comment>
<feature type="chain" id="PRO_0000091809" description="Forkhead box protein C2">
    <location>
        <begin position="1"/>
        <end position="494"/>
    </location>
</feature>
<feature type="DNA-binding region" description="Fork-head" evidence="2">
    <location>
        <begin position="70"/>
        <end position="161"/>
    </location>
</feature>
<feature type="region of interest" description="Disordered" evidence="3">
    <location>
        <begin position="166"/>
        <end position="213"/>
    </location>
</feature>
<feature type="region of interest" description="Disordered" evidence="3">
    <location>
        <begin position="233"/>
        <end position="267"/>
    </location>
</feature>
<feature type="region of interest" description="Disordered" evidence="3">
    <location>
        <begin position="381"/>
        <end position="422"/>
    </location>
</feature>
<feature type="compositionally biased region" description="Basic and acidic residues" evidence="3">
    <location>
        <begin position="170"/>
        <end position="184"/>
    </location>
</feature>
<feature type="compositionally biased region" description="Basic and acidic residues" evidence="3">
    <location>
        <begin position="202"/>
        <end position="212"/>
    </location>
</feature>
<feature type="compositionally biased region" description="Polar residues" evidence="3">
    <location>
        <begin position="239"/>
        <end position="248"/>
    </location>
</feature>
<feature type="compositionally biased region" description="Basic residues" evidence="3">
    <location>
        <begin position="385"/>
        <end position="394"/>
    </location>
</feature>
<feature type="compositionally biased region" description="Pro residues" evidence="3">
    <location>
        <begin position="397"/>
        <end position="410"/>
    </location>
</feature>
<feature type="modified residue" description="Phosphoserine" evidence="1">
    <location>
        <position position="214"/>
    </location>
</feature>
<feature type="modified residue" description="Phosphoserine" evidence="1">
    <location>
        <position position="218"/>
    </location>
</feature>
<feature type="modified residue" description="Phosphoserine" evidence="8">
    <location>
        <position position="231"/>
    </location>
</feature>
<feature type="modified residue" description="Phosphoserine" evidence="8">
    <location>
        <position position="239"/>
    </location>
</feature>
<feature type="modified residue" description="Phosphothreonine" evidence="1">
    <location>
        <position position="246"/>
    </location>
</feature>
<feature type="modified residue" description="Phosphoserine" evidence="1">
    <location>
        <position position="250"/>
    </location>
</feature>
<feature type="modified residue" description="Omega-N-methylarginine" evidence="9">
    <location>
        <position position="278"/>
    </location>
</feature>
<feature type="modified residue" description="Phosphoserine" evidence="1">
    <location>
        <position position="280"/>
    </location>
</feature>
<feature type="modified residue" description="Phosphoserine" evidence="8">
    <location>
        <position position="287"/>
    </location>
</feature>
<feature type="modified residue" description="Omega-N-methylarginine" evidence="9">
    <location>
        <position position="292"/>
    </location>
</feature>
<feature type="modified residue" description="Phosphoserine" evidence="1">
    <location>
        <position position="366"/>
    </location>
</feature>
<feature type="modified residue" description="Asymmetric dimethylarginine" evidence="9">
    <location>
        <position position="452"/>
    </location>
</feature>
<feature type="cross-link" description="Glycyl lysine isopeptide (Lys-Gly) (interchain with G-Cter in SUMO2)" evidence="1">
    <location>
        <position position="183"/>
    </location>
</feature>
<feature type="cross-link" description="Glycyl lysine isopeptide (Lys-Gly) (interchain with G-Cter in SUMO2)" evidence="1">
    <location>
        <position position="213"/>
    </location>
</feature>
<feature type="sequence conflict" description="In Ref. 1; CAA63244." evidence="7" ref="1">
    <original>AL</original>
    <variation>V</variation>
    <location>
        <begin position="12"/>
        <end position="13"/>
    </location>
</feature>
<feature type="sequence conflict" description="In Ref. 3; BAC36298." evidence="7" ref="3">
    <original>L</original>
    <variation>I</variation>
    <location>
        <position position="182"/>
    </location>
</feature>
<feature type="sequence conflict" description="In Ref. 3; BAC36298." evidence="7" ref="3">
    <original>H</original>
    <variation>Q</variation>
    <location>
        <position position="388"/>
    </location>
</feature>
<gene>
    <name type="primary">Foxc2</name>
    <name type="synonym">Fkh14</name>
    <name type="synonym">Fkhl14</name>
    <name type="synonym">Mfh1</name>
</gene>
<name>FOXC2_MOUSE</name>
<protein>
    <recommendedName>
        <fullName>Forkhead box protein C2</fullName>
    </recommendedName>
    <alternativeName>
        <fullName>Brain factor 3</fullName>
        <shortName>BF-3</shortName>
    </alternativeName>
    <alternativeName>
        <fullName>Forkhead-related protein FKHL14</fullName>
    </alternativeName>
    <alternativeName>
        <fullName>Mesenchyme fork head protein 1</fullName>
        <shortName>MFH-1 protein</shortName>
    </alternativeName>
    <alternativeName>
        <fullName>Transcription factor FKH-14</fullName>
    </alternativeName>
</protein>
<evidence type="ECO:0000250" key="1">
    <source>
        <dbReference type="UniProtKB" id="Q99958"/>
    </source>
</evidence>
<evidence type="ECO:0000255" key="2">
    <source>
        <dbReference type="PROSITE-ProRule" id="PRU00089"/>
    </source>
</evidence>
<evidence type="ECO:0000256" key="3">
    <source>
        <dbReference type="SAM" id="MobiDB-lite"/>
    </source>
</evidence>
<evidence type="ECO:0000269" key="4">
    <source>
    </source>
</evidence>
<evidence type="ECO:0000269" key="5">
    <source>
    </source>
</evidence>
<evidence type="ECO:0000269" key="6">
    <source>
    </source>
</evidence>
<evidence type="ECO:0000305" key="7"/>
<evidence type="ECO:0007744" key="8">
    <source>
    </source>
</evidence>
<evidence type="ECO:0007744" key="9">
    <source>
    </source>
</evidence>
<reference key="1">
    <citation type="journal article" date="1996" name="Development">
        <title>Clustered arrangement of winged helix genes fkh-6 and MFH-1: possible implications for mesoderm development.</title>
        <authorList>
            <person name="Kaestner K.H."/>
            <person name="Bleckmann S.C."/>
            <person name="Monaghan A.P."/>
            <person name="Schlondorff J."/>
            <person name="Mincheva A."/>
            <person name="Lichter P."/>
            <person name="Schuetz G."/>
        </authorList>
    </citation>
    <scope>NUCLEOTIDE SEQUENCE [MRNA]</scope>
    <scope>TISSUE SPECIFICITY</scope>
    <scope>DEVELOPMENTAL STAGE</scope>
    <source>
        <strain>C57BL/6J</strain>
        <tissue>Embryo</tissue>
    </source>
</reference>
<reference key="2">
    <citation type="journal article" date="1997" name="Genomics">
        <title>Isolation of the mouse (MFH-1) and human (FKHL 14) mesenchyme fork head-1 genes reveals conservation of their gene and protein structures.</title>
        <authorList>
            <person name="Miura N."/>
            <person name="Iida K."/>
            <person name="Kakinuma H."/>
            <person name="Yang X.-L."/>
            <person name="Sugiyama T."/>
        </authorList>
    </citation>
    <scope>NUCLEOTIDE SEQUENCE [GENOMIC DNA / MRNA]</scope>
    <scope>FUNCTION</scope>
    <source>
        <strain>129</strain>
        <strain>ICR</strain>
        <tissue>Embryo</tissue>
    </source>
</reference>
<reference key="3">
    <citation type="journal article" date="2005" name="Science">
        <title>The transcriptional landscape of the mammalian genome.</title>
        <authorList>
            <person name="Carninci P."/>
            <person name="Kasukawa T."/>
            <person name="Katayama S."/>
            <person name="Gough J."/>
            <person name="Frith M.C."/>
            <person name="Maeda N."/>
            <person name="Oyama R."/>
            <person name="Ravasi T."/>
            <person name="Lenhard B."/>
            <person name="Wells C."/>
            <person name="Kodzius R."/>
            <person name="Shimokawa K."/>
            <person name="Bajic V.B."/>
            <person name="Brenner S.E."/>
            <person name="Batalov S."/>
            <person name="Forrest A.R."/>
            <person name="Zavolan M."/>
            <person name="Davis M.J."/>
            <person name="Wilming L.G."/>
            <person name="Aidinis V."/>
            <person name="Allen J.E."/>
            <person name="Ambesi-Impiombato A."/>
            <person name="Apweiler R."/>
            <person name="Aturaliya R.N."/>
            <person name="Bailey T.L."/>
            <person name="Bansal M."/>
            <person name="Baxter L."/>
            <person name="Beisel K.W."/>
            <person name="Bersano T."/>
            <person name="Bono H."/>
            <person name="Chalk A.M."/>
            <person name="Chiu K.P."/>
            <person name="Choudhary V."/>
            <person name="Christoffels A."/>
            <person name="Clutterbuck D.R."/>
            <person name="Crowe M.L."/>
            <person name="Dalla E."/>
            <person name="Dalrymple B.P."/>
            <person name="de Bono B."/>
            <person name="Della Gatta G."/>
            <person name="di Bernardo D."/>
            <person name="Down T."/>
            <person name="Engstrom P."/>
            <person name="Fagiolini M."/>
            <person name="Faulkner G."/>
            <person name="Fletcher C.F."/>
            <person name="Fukushima T."/>
            <person name="Furuno M."/>
            <person name="Futaki S."/>
            <person name="Gariboldi M."/>
            <person name="Georgii-Hemming P."/>
            <person name="Gingeras T.R."/>
            <person name="Gojobori T."/>
            <person name="Green R.E."/>
            <person name="Gustincich S."/>
            <person name="Harbers M."/>
            <person name="Hayashi Y."/>
            <person name="Hensch T.K."/>
            <person name="Hirokawa N."/>
            <person name="Hill D."/>
            <person name="Huminiecki L."/>
            <person name="Iacono M."/>
            <person name="Ikeo K."/>
            <person name="Iwama A."/>
            <person name="Ishikawa T."/>
            <person name="Jakt M."/>
            <person name="Kanapin A."/>
            <person name="Katoh M."/>
            <person name="Kawasawa Y."/>
            <person name="Kelso J."/>
            <person name="Kitamura H."/>
            <person name="Kitano H."/>
            <person name="Kollias G."/>
            <person name="Krishnan S.P."/>
            <person name="Kruger A."/>
            <person name="Kummerfeld S.K."/>
            <person name="Kurochkin I.V."/>
            <person name="Lareau L.F."/>
            <person name="Lazarevic D."/>
            <person name="Lipovich L."/>
            <person name="Liu J."/>
            <person name="Liuni S."/>
            <person name="McWilliam S."/>
            <person name="Madan Babu M."/>
            <person name="Madera M."/>
            <person name="Marchionni L."/>
            <person name="Matsuda H."/>
            <person name="Matsuzawa S."/>
            <person name="Miki H."/>
            <person name="Mignone F."/>
            <person name="Miyake S."/>
            <person name="Morris K."/>
            <person name="Mottagui-Tabar S."/>
            <person name="Mulder N."/>
            <person name="Nakano N."/>
            <person name="Nakauchi H."/>
            <person name="Ng P."/>
            <person name="Nilsson R."/>
            <person name="Nishiguchi S."/>
            <person name="Nishikawa S."/>
            <person name="Nori F."/>
            <person name="Ohara O."/>
            <person name="Okazaki Y."/>
            <person name="Orlando V."/>
            <person name="Pang K.C."/>
            <person name="Pavan W.J."/>
            <person name="Pavesi G."/>
            <person name="Pesole G."/>
            <person name="Petrovsky N."/>
            <person name="Piazza S."/>
            <person name="Reed J."/>
            <person name="Reid J.F."/>
            <person name="Ring B.Z."/>
            <person name="Ringwald M."/>
            <person name="Rost B."/>
            <person name="Ruan Y."/>
            <person name="Salzberg S.L."/>
            <person name="Sandelin A."/>
            <person name="Schneider C."/>
            <person name="Schoenbach C."/>
            <person name="Sekiguchi K."/>
            <person name="Semple C.A."/>
            <person name="Seno S."/>
            <person name="Sessa L."/>
            <person name="Sheng Y."/>
            <person name="Shibata Y."/>
            <person name="Shimada H."/>
            <person name="Shimada K."/>
            <person name="Silva D."/>
            <person name="Sinclair B."/>
            <person name="Sperling S."/>
            <person name="Stupka E."/>
            <person name="Sugiura K."/>
            <person name="Sultana R."/>
            <person name="Takenaka Y."/>
            <person name="Taki K."/>
            <person name="Tammoja K."/>
            <person name="Tan S.L."/>
            <person name="Tang S."/>
            <person name="Taylor M.S."/>
            <person name="Tegner J."/>
            <person name="Teichmann S.A."/>
            <person name="Ueda H.R."/>
            <person name="van Nimwegen E."/>
            <person name="Verardo R."/>
            <person name="Wei C.L."/>
            <person name="Yagi K."/>
            <person name="Yamanishi H."/>
            <person name="Zabarovsky E."/>
            <person name="Zhu S."/>
            <person name="Zimmer A."/>
            <person name="Hide W."/>
            <person name="Bult C."/>
            <person name="Grimmond S.M."/>
            <person name="Teasdale R.D."/>
            <person name="Liu E.T."/>
            <person name="Brusic V."/>
            <person name="Quackenbush J."/>
            <person name="Wahlestedt C."/>
            <person name="Mattick J.S."/>
            <person name="Hume D.A."/>
            <person name="Kai C."/>
            <person name="Sasaki D."/>
            <person name="Tomaru Y."/>
            <person name="Fukuda S."/>
            <person name="Kanamori-Katayama M."/>
            <person name="Suzuki M."/>
            <person name="Aoki J."/>
            <person name="Arakawa T."/>
            <person name="Iida J."/>
            <person name="Imamura K."/>
            <person name="Itoh M."/>
            <person name="Kato T."/>
            <person name="Kawaji H."/>
            <person name="Kawagashira N."/>
            <person name="Kawashima T."/>
            <person name="Kojima M."/>
            <person name="Kondo S."/>
            <person name="Konno H."/>
            <person name="Nakano K."/>
            <person name="Ninomiya N."/>
            <person name="Nishio T."/>
            <person name="Okada M."/>
            <person name="Plessy C."/>
            <person name="Shibata K."/>
            <person name="Shiraki T."/>
            <person name="Suzuki S."/>
            <person name="Tagami M."/>
            <person name="Waki K."/>
            <person name="Watahiki A."/>
            <person name="Okamura-Oho Y."/>
            <person name="Suzuki H."/>
            <person name="Kawai J."/>
            <person name="Hayashizaki Y."/>
        </authorList>
    </citation>
    <scope>NUCLEOTIDE SEQUENCE [LARGE SCALE MRNA]</scope>
    <source>
        <strain>C57BL/6J</strain>
        <tissue>Skin</tissue>
    </source>
</reference>
<reference key="4">
    <citation type="journal article" date="1993" name="FEBS Lett.">
        <title>MFH-1, a new member of the fork head domain family, is expressed in developing mesenchyme.</title>
        <authorList>
            <person name="Miura N."/>
            <person name="Wanaka A."/>
            <person name="Tohyama M."/>
            <person name="Tanaka K."/>
        </authorList>
    </citation>
    <scope>NUCLEOTIDE SEQUENCE [MRNA] OF 34-494</scope>
</reference>
<reference key="5">
    <citation type="journal article" date="2010" name="Cell">
        <title>A tissue-specific atlas of mouse protein phosphorylation and expression.</title>
        <authorList>
            <person name="Huttlin E.L."/>
            <person name="Jedrychowski M.P."/>
            <person name="Elias J.E."/>
            <person name="Goswami T."/>
            <person name="Rad R."/>
            <person name="Beausoleil S.A."/>
            <person name="Villen J."/>
            <person name="Haas W."/>
            <person name="Sowa M.E."/>
            <person name="Gygi S.P."/>
        </authorList>
    </citation>
    <scope>PHOSPHORYLATION [LARGE SCALE ANALYSIS] AT SER-231; SER-239 AND SER-287</scope>
    <scope>IDENTIFICATION BY MASS SPECTROMETRY [LARGE SCALE ANALYSIS]</scope>
    <source>
        <tissue>Kidney</tissue>
        <tissue>Lung</tissue>
    </source>
</reference>
<reference key="6">
    <citation type="journal article" date="2017" name="Circ. Res.">
        <title>Polydom Is an Extracellular Matrix Protein Involved in Lymphatic Vessel Remodeling.</title>
        <authorList>
            <person name="Morooka N."/>
            <person name="Futaki S."/>
            <person name="Sato-Nishiuchi R."/>
            <person name="Nishino M."/>
            <person name="Totani Y."/>
            <person name="Shimono C."/>
            <person name="Nakano I."/>
            <person name="Nakajima H."/>
            <person name="Mochizuki N."/>
            <person name="Sekiguchi K."/>
        </authorList>
    </citation>
    <scope>DEVELOPMENTAL STAGE</scope>
</reference>
<reference key="7">
    <citation type="journal article" date="2014" name="Mol. Cell. Proteomics">
        <title>Immunoaffinity enrichment and mass spectrometry analysis of protein methylation.</title>
        <authorList>
            <person name="Guo A."/>
            <person name="Gu H."/>
            <person name="Zhou J."/>
            <person name="Mulhern D."/>
            <person name="Wang Y."/>
            <person name="Lee K.A."/>
            <person name="Yang V."/>
            <person name="Aguiar M."/>
            <person name="Kornhauser J."/>
            <person name="Jia X."/>
            <person name="Ren J."/>
            <person name="Beausoleil S.A."/>
            <person name="Silva J.C."/>
            <person name="Vemulapalli V."/>
            <person name="Bedford M.T."/>
            <person name="Comb M.J."/>
        </authorList>
    </citation>
    <scope>METHYLATION [LARGE SCALE ANALYSIS] AT ARG-278; ARG-292 AND ARG-452</scope>
    <scope>IDENTIFICATION BY MASS SPECTROMETRY [LARGE SCALE ANALYSIS]</scope>
    <source>
        <tissue>Embryo</tissue>
    </source>
</reference>